<organism>
    <name type="scientific">Bacillus subtilis (strain 168)</name>
    <dbReference type="NCBI Taxonomy" id="224308"/>
    <lineage>
        <taxon>Bacteria</taxon>
        <taxon>Bacillati</taxon>
        <taxon>Bacillota</taxon>
        <taxon>Bacilli</taxon>
        <taxon>Bacillales</taxon>
        <taxon>Bacillaceae</taxon>
        <taxon>Bacillus</taxon>
    </lineage>
</organism>
<protein>
    <recommendedName>
        <fullName>Uncharacterized HTH-type transcriptional regulator YobD</fullName>
    </recommendedName>
</protein>
<reference key="1">
    <citation type="submission" date="1997-10" db="EMBL/GenBank/DDBJ databases">
        <title>Sequence analysis of the Bacillus subtilis chromosome region between the terC and odhAB loci cloned in a yeast artificial chromosome.</title>
        <authorList>
            <person name="Lapidus A."/>
            <person name="Galleron N."/>
            <person name="Sorokin A."/>
            <person name="Ehrlich S.D."/>
        </authorList>
    </citation>
    <scope>NUCLEOTIDE SEQUENCE [GENOMIC DNA]</scope>
</reference>
<reference key="2">
    <citation type="journal article" date="1997" name="Nature">
        <title>The complete genome sequence of the Gram-positive bacterium Bacillus subtilis.</title>
        <authorList>
            <person name="Kunst F."/>
            <person name="Ogasawara N."/>
            <person name="Moszer I."/>
            <person name="Albertini A.M."/>
            <person name="Alloni G."/>
            <person name="Azevedo V."/>
            <person name="Bertero M.G."/>
            <person name="Bessieres P."/>
            <person name="Bolotin A."/>
            <person name="Borchert S."/>
            <person name="Borriss R."/>
            <person name="Boursier L."/>
            <person name="Brans A."/>
            <person name="Braun M."/>
            <person name="Brignell S.C."/>
            <person name="Bron S."/>
            <person name="Brouillet S."/>
            <person name="Bruschi C.V."/>
            <person name="Caldwell B."/>
            <person name="Capuano V."/>
            <person name="Carter N.M."/>
            <person name="Choi S.-K."/>
            <person name="Codani J.-J."/>
            <person name="Connerton I.F."/>
            <person name="Cummings N.J."/>
            <person name="Daniel R.A."/>
            <person name="Denizot F."/>
            <person name="Devine K.M."/>
            <person name="Duesterhoeft A."/>
            <person name="Ehrlich S.D."/>
            <person name="Emmerson P.T."/>
            <person name="Entian K.-D."/>
            <person name="Errington J."/>
            <person name="Fabret C."/>
            <person name="Ferrari E."/>
            <person name="Foulger D."/>
            <person name="Fritz C."/>
            <person name="Fujita M."/>
            <person name="Fujita Y."/>
            <person name="Fuma S."/>
            <person name="Galizzi A."/>
            <person name="Galleron N."/>
            <person name="Ghim S.-Y."/>
            <person name="Glaser P."/>
            <person name="Goffeau A."/>
            <person name="Golightly E.J."/>
            <person name="Grandi G."/>
            <person name="Guiseppi G."/>
            <person name="Guy B.J."/>
            <person name="Haga K."/>
            <person name="Haiech J."/>
            <person name="Harwood C.R."/>
            <person name="Henaut A."/>
            <person name="Hilbert H."/>
            <person name="Holsappel S."/>
            <person name="Hosono S."/>
            <person name="Hullo M.-F."/>
            <person name="Itaya M."/>
            <person name="Jones L.-M."/>
            <person name="Joris B."/>
            <person name="Karamata D."/>
            <person name="Kasahara Y."/>
            <person name="Klaerr-Blanchard M."/>
            <person name="Klein C."/>
            <person name="Kobayashi Y."/>
            <person name="Koetter P."/>
            <person name="Koningstein G."/>
            <person name="Krogh S."/>
            <person name="Kumano M."/>
            <person name="Kurita K."/>
            <person name="Lapidus A."/>
            <person name="Lardinois S."/>
            <person name="Lauber J."/>
            <person name="Lazarevic V."/>
            <person name="Lee S.-M."/>
            <person name="Levine A."/>
            <person name="Liu H."/>
            <person name="Masuda S."/>
            <person name="Mauel C."/>
            <person name="Medigue C."/>
            <person name="Medina N."/>
            <person name="Mellado R.P."/>
            <person name="Mizuno M."/>
            <person name="Moestl D."/>
            <person name="Nakai S."/>
            <person name="Noback M."/>
            <person name="Noone D."/>
            <person name="O'Reilly M."/>
            <person name="Ogawa K."/>
            <person name="Ogiwara A."/>
            <person name="Oudega B."/>
            <person name="Park S.-H."/>
            <person name="Parro V."/>
            <person name="Pohl T.M."/>
            <person name="Portetelle D."/>
            <person name="Porwollik S."/>
            <person name="Prescott A.M."/>
            <person name="Presecan E."/>
            <person name="Pujic P."/>
            <person name="Purnelle B."/>
            <person name="Rapoport G."/>
            <person name="Rey M."/>
            <person name="Reynolds S."/>
            <person name="Rieger M."/>
            <person name="Rivolta C."/>
            <person name="Rocha E."/>
            <person name="Roche B."/>
            <person name="Rose M."/>
            <person name="Sadaie Y."/>
            <person name="Sato T."/>
            <person name="Scanlan E."/>
            <person name="Schleich S."/>
            <person name="Schroeter R."/>
            <person name="Scoffone F."/>
            <person name="Sekiguchi J."/>
            <person name="Sekowska A."/>
            <person name="Seror S.J."/>
            <person name="Serror P."/>
            <person name="Shin B.-S."/>
            <person name="Soldo B."/>
            <person name="Sorokin A."/>
            <person name="Tacconi E."/>
            <person name="Takagi T."/>
            <person name="Takahashi H."/>
            <person name="Takemaru K."/>
            <person name="Takeuchi M."/>
            <person name="Tamakoshi A."/>
            <person name="Tanaka T."/>
            <person name="Terpstra P."/>
            <person name="Tognoni A."/>
            <person name="Tosato V."/>
            <person name="Uchiyama S."/>
            <person name="Vandenbol M."/>
            <person name="Vannier F."/>
            <person name="Vassarotti A."/>
            <person name="Viari A."/>
            <person name="Wambutt R."/>
            <person name="Wedler E."/>
            <person name="Wedler H."/>
            <person name="Weitzenegger T."/>
            <person name="Winters P."/>
            <person name="Wipat A."/>
            <person name="Yamamoto H."/>
            <person name="Yamane K."/>
            <person name="Yasumoto K."/>
            <person name="Yata K."/>
            <person name="Yoshida K."/>
            <person name="Yoshikawa H.-F."/>
            <person name="Zumstein E."/>
            <person name="Yoshikawa H."/>
            <person name="Danchin A."/>
        </authorList>
    </citation>
    <scope>NUCLEOTIDE SEQUENCE [LARGE SCALE GENOMIC DNA]</scope>
    <source>
        <strain>168</strain>
    </source>
</reference>
<keyword id="KW-0238">DNA-binding</keyword>
<keyword id="KW-1185">Reference proteome</keyword>
<keyword id="KW-0804">Transcription</keyword>
<keyword id="KW-0805">Transcription regulation</keyword>
<sequence>MYCQRLRQLRKAHKLTMEQLAEKIGIAKSSYGGYEAESKKPPLDKLVILARLYDVSVDYILGLTDDPDPKVERKNLKEFLEKPDIHWDGYKLTPEILDPIRKILKLVTANNN</sequence>
<evidence type="ECO:0000255" key="1">
    <source>
        <dbReference type="PROSITE-ProRule" id="PRU00257"/>
    </source>
</evidence>
<dbReference type="EMBL" id="AF027868">
    <property type="protein sequence ID" value="AAB84427.1"/>
    <property type="molecule type" value="Genomic_DNA"/>
</dbReference>
<dbReference type="EMBL" id="AL009126">
    <property type="protein sequence ID" value="CAB13777.1"/>
    <property type="molecule type" value="Genomic_DNA"/>
</dbReference>
<dbReference type="PIR" id="D69898">
    <property type="entry name" value="D69898"/>
</dbReference>
<dbReference type="RefSeq" id="NP_389766.1">
    <property type="nucleotide sequence ID" value="NC_000964.3"/>
</dbReference>
<dbReference type="RefSeq" id="WP_009967401.1">
    <property type="nucleotide sequence ID" value="NZ_OZ025638.1"/>
</dbReference>
<dbReference type="SMR" id="O34647"/>
<dbReference type="FunCoup" id="O34647">
    <property type="interactions" value="25"/>
</dbReference>
<dbReference type="STRING" id="224308.BSU18850"/>
<dbReference type="PaxDb" id="224308-BSU18850"/>
<dbReference type="EnsemblBacteria" id="CAB13777">
    <property type="protein sequence ID" value="CAB13777"/>
    <property type="gene ID" value="BSU_18850"/>
</dbReference>
<dbReference type="GeneID" id="939975"/>
<dbReference type="KEGG" id="bsu:BSU18850"/>
<dbReference type="PATRIC" id="fig|224308.179.peg.2056"/>
<dbReference type="eggNOG" id="COG1396">
    <property type="taxonomic scope" value="Bacteria"/>
</dbReference>
<dbReference type="InParanoid" id="O34647"/>
<dbReference type="OrthoDB" id="8115576at2"/>
<dbReference type="PhylomeDB" id="O34647"/>
<dbReference type="BioCyc" id="BSUB:BSU18850-MONOMER"/>
<dbReference type="Proteomes" id="UP000001570">
    <property type="component" value="Chromosome"/>
</dbReference>
<dbReference type="GO" id="GO:0003677">
    <property type="term" value="F:DNA binding"/>
    <property type="evidence" value="ECO:0007669"/>
    <property type="project" value="UniProtKB-KW"/>
</dbReference>
<dbReference type="GO" id="GO:0003700">
    <property type="term" value="F:DNA-binding transcription factor activity"/>
    <property type="evidence" value="ECO:0000318"/>
    <property type="project" value="GO_Central"/>
</dbReference>
<dbReference type="GO" id="GO:0006355">
    <property type="term" value="P:regulation of DNA-templated transcription"/>
    <property type="evidence" value="ECO:0000318"/>
    <property type="project" value="GO_Central"/>
</dbReference>
<dbReference type="CDD" id="cd00093">
    <property type="entry name" value="HTH_XRE"/>
    <property type="match status" value="1"/>
</dbReference>
<dbReference type="Gene3D" id="1.10.260.40">
    <property type="entry name" value="lambda repressor-like DNA-binding domains"/>
    <property type="match status" value="1"/>
</dbReference>
<dbReference type="InterPro" id="IPR001387">
    <property type="entry name" value="Cro/C1-type_HTH"/>
</dbReference>
<dbReference type="InterPro" id="IPR010982">
    <property type="entry name" value="Lambda_DNA-bd_dom_sf"/>
</dbReference>
<dbReference type="PANTHER" id="PTHR46558:SF14">
    <property type="entry name" value="HTH-TYPE TRANSCRIPTIONAL REGULATOR ANSR"/>
    <property type="match status" value="1"/>
</dbReference>
<dbReference type="PANTHER" id="PTHR46558">
    <property type="entry name" value="TRACRIPTIONAL REGULATORY PROTEIN-RELATED-RELATED"/>
    <property type="match status" value="1"/>
</dbReference>
<dbReference type="Pfam" id="PF01381">
    <property type="entry name" value="HTH_3"/>
    <property type="match status" value="1"/>
</dbReference>
<dbReference type="SMART" id="SM00530">
    <property type="entry name" value="HTH_XRE"/>
    <property type="match status" value="1"/>
</dbReference>
<dbReference type="SUPFAM" id="SSF47413">
    <property type="entry name" value="lambda repressor-like DNA-binding domains"/>
    <property type="match status" value="1"/>
</dbReference>
<dbReference type="PROSITE" id="PS50943">
    <property type="entry name" value="HTH_CROC1"/>
    <property type="match status" value="1"/>
</dbReference>
<proteinExistence type="predicted"/>
<name>YOBD_BACSU</name>
<accession>O34647</accession>
<accession>Q796E7</accession>
<gene>
    <name type="primary">yobD</name>
    <name type="ordered locus">BSU18850</name>
</gene>
<feature type="chain" id="PRO_0000359978" description="Uncharacterized HTH-type transcriptional regulator YobD">
    <location>
        <begin position="1"/>
        <end position="112"/>
    </location>
</feature>
<feature type="domain" description="HTH cro/C1-type" evidence="1">
    <location>
        <begin position="6"/>
        <end position="60"/>
    </location>
</feature>
<feature type="DNA-binding region" description="H-T-H motif" evidence="1">
    <location>
        <begin position="17"/>
        <end position="36"/>
    </location>
</feature>